<reference key="1">
    <citation type="journal article" date="1998" name="Gene">
        <title>Isolation and characterization of cDNAs encoding PDE5A, a human cGMP-binding, cGMP-specific 3',5'-cyclic nucleotide phosphodiesterase.</title>
        <authorList>
            <person name="Loughney K."/>
            <person name="Hill T.R."/>
            <person name="Florio V.A."/>
            <person name="Uher L."/>
            <person name="Rosman G.J."/>
            <person name="Wolda S.L."/>
            <person name="Jones B.A."/>
            <person name="Howard M.L."/>
            <person name="McAllister-Lucas L.M."/>
            <person name="Sonnenburg W.K."/>
            <person name="Francis S.H."/>
            <person name="Corbin J.D."/>
            <person name="Beavo J.A."/>
            <person name="Ferguson K."/>
        </authorList>
    </citation>
    <scope>NUCLEOTIDE SEQUENCE [MRNA] (ISOFORMS PDE5A1 AND PDE5A2)</scope>
    <scope>FUNCTION</scope>
    <scope>CATALYTIC ACTIVITY</scope>
    <scope>VARIANT VAL-93</scope>
</reference>
<reference key="2">
    <citation type="journal article" date="1998" name="Eur. J. Biochem.">
        <title>Expression, structure and chromosomal localization of the human cGMP-binding cGMP-specific phosphodiesterase PDE5A gene.</title>
        <authorList>
            <person name="Yanaka N."/>
            <person name="Kotera J."/>
            <person name="Ohtsuka A."/>
            <person name="Akatsuka H."/>
            <person name="Imai Y."/>
            <person name="Michibata H."/>
            <person name="Fujishige K."/>
            <person name="Kawai E."/>
            <person name="Takebayashi S."/>
            <person name="Okumura K."/>
            <person name="Omori K."/>
        </authorList>
    </citation>
    <scope>NUCLEOTIDE SEQUENCE [GENOMIC DNA / MRNA] (ISOFORM PDE5A1)</scope>
    <scope>VARIANT VAL-93</scope>
    <source>
        <tissue>Lung</tissue>
        <tissue>Placenta</tissue>
    </source>
</reference>
<reference key="3">
    <citation type="journal article" date="1998" name="Biochem. Biophys. Res. Commun.">
        <title>Molecular cloning and expression of human cGMP-binding cGMP-specific phosphodiesterase.</title>
        <authorList>
            <person name="Stacey P."/>
            <person name="Rulten S."/>
            <person name="Dapling A."/>
            <person name="Phillips S.C."/>
        </authorList>
    </citation>
    <scope>NUCLEOTIDE SEQUENCE [MRNA] (ISOFORM PDE5A1)</scope>
    <scope>VARIANT VAL-93</scope>
    <source>
        <tissue>Prostate</tissue>
        <tissue>Skeletal muscle</tissue>
    </source>
</reference>
<reference key="4">
    <citation type="submission" date="1998-06" db="EMBL/GenBank/DDBJ databases">
        <title>Molecular cloning and characterization of human cGMP-specific phosphodiesterase 5A2 cDNA.</title>
        <authorList>
            <person name="Kotera J."/>
            <person name="Imai Y."/>
            <person name="Omori K."/>
        </authorList>
    </citation>
    <scope>NUCLEOTIDE SEQUENCE [MRNA] (ISOFORM PDE5A2)</scope>
    <scope>VARIANT VAL-93</scope>
    <source>
        <tissue>Lung</tissue>
    </source>
</reference>
<reference key="5">
    <citation type="submission" date="2003-03" db="EMBL/GenBank/DDBJ databases">
        <title>PDE5A splice variants in T84 cells.</title>
        <authorList>
            <person name="Sopory S."/>
            <person name="Visweswariah S.S."/>
        </authorList>
    </citation>
    <scope>NUCLEOTIDE SEQUENCE [MRNA] (ISOFORM PDE5A2)</scope>
    <source>
        <tissue>Colon carcinoma</tissue>
    </source>
</reference>
<reference key="6">
    <citation type="journal article" date="2004" name="Nat. Genet.">
        <title>Complete sequencing and characterization of 21,243 full-length human cDNAs.</title>
        <authorList>
            <person name="Ota T."/>
            <person name="Suzuki Y."/>
            <person name="Nishikawa T."/>
            <person name="Otsuki T."/>
            <person name="Sugiyama T."/>
            <person name="Irie R."/>
            <person name="Wakamatsu A."/>
            <person name="Hayashi K."/>
            <person name="Sato H."/>
            <person name="Nagai K."/>
            <person name="Kimura K."/>
            <person name="Makita H."/>
            <person name="Sekine M."/>
            <person name="Obayashi M."/>
            <person name="Nishi T."/>
            <person name="Shibahara T."/>
            <person name="Tanaka T."/>
            <person name="Ishii S."/>
            <person name="Yamamoto J."/>
            <person name="Saito K."/>
            <person name="Kawai Y."/>
            <person name="Isono Y."/>
            <person name="Nakamura Y."/>
            <person name="Nagahari K."/>
            <person name="Murakami K."/>
            <person name="Yasuda T."/>
            <person name="Iwayanagi T."/>
            <person name="Wagatsuma M."/>
            <person name="Shiratori A."/>
            <person name="Sudo H."/>
            <person name="Hosoiri T."/>
            <person name="Kaku Y."/>
            <person name="Kodaira H."/>
            <person name="Kondo H."/>
            <person name="Sugawara M."/>
            <person name="Takahashi M."/>
            <person name="Kanda K."/>
            <person name="Yokoi T."/>
            <person name="Furuya T."/>
            <person name="Kikkawa E."/>
            <person name="Omura Y."/>
            <person name="Abe K."/>
            <person name="Kamihara K."/>
            <person name="Katsuta N."/>
            <person name="Sato K."/>
            <person name="Tanikawa M."/>
            <person name="Yamazaki M."/>
            <person name="Ninomiya K."/>
            <person name="Ishibashi T."/>
            <person name="Yamashita H."/>
            <person name="Murakawa K."/>
            <person name="Fujimori K."/>
            <person name="Tanai H."/>
            <person name="Kimata M."/>
            <person name="Watanabe M."/>
            <person name="Hiraoka S."/>
            <person name="Chiba Y."/>
            <person name="Ishida S."/>
            <person name="Ono Y."/>
            <person name="Takiguchi S."/>
            <person name="Watanabe S."/>
            <person name="Yosida M."/>
            <person name="Hotuta T."/>
            <person name="Kusano J."/>
            <person name="Kanehori K."/>
            <person name="Takahashi-Fujii A."/>
            <person name="Hara H."/>
            <person name="Tanase T.-O."/>
            <person name="Nomura Y."/>
            <person name="Togiya S."/>
            <person name="Komai F."/>
            <person name="Hara R."/>
            <person name="Takeuchi K."/>
            <person name="Arita M."/>
            <person name="Imose N."/>
            <person name="Musashino K."/>
            <person name="Yuuki H."/>
            <person name="Oshima A."/>
            <person name="Sasaki N."/>
            <person name="Aotsuka S."/>
            <person name="Yoshikawa Y."/>
            <person name="Matsunawa H."/>
            <person name="Ichihara T."/>
            <person name="Shiohata N."/>
            <person name="Sano S."/>
            <person name="Moriya S."/>
            <person name="Momiyama H."/>
            <person name="Satoh N."/>
            <person name="Takami S."/>
            <person name="Terashima Y."/>
            <person name="Suzuki O."/>
            <person name="Nakagawa S."/>
            <person name="Senoh A."/>
            <person name="Mizoguchi H."/>
            <person name="Goto Y."/>
            <person name="Shimizu F."/>
            <person name="Wakebe H."/>
            <person name="Hishigaki H."/>
            <person name="Watanabe T."/>
            <person name="Sugiyama A."/>
            <person name="Takemoto M."/>
            <person name="Kawakami B."/>
            <person name="Yamazaki M."/>
            <person name="Watanabe K."/>
            <person name="Kumagai A."/>
            <person name="Itakura S."/>
            <person name="Fukuzumi Y."/>
            <person name="Fujimori Y."/>
            <person name="Komiyama M."/>
            <person name="Tashiro H."/>
            <person name="Tanigami A."/>
            <person name="Fujiwara T."/>
            <person name="Ono T."/>
            <person name="Yamada K."/>
            <person name="Fujii Y."/>
            <person name="Ozaki K."/>
            <person name="Hirao M."/>
            <person name="Ohmori Y."/>
            <person name="Kawabata A."/>
            <person name="Hikiji T."/>
            <person name="Kobatake N."/>
            <person name="Inagaki H."/>
            <person name="Ikema Y."/>
            <person name="Okamoto S."/>
            <person name="Okitani R."/>
            <person name="Kawakami T."/>
            <person name="Noguchi S."/>
            <person name="Itoh T."/>
            <person name="Shigeta K."/>
            <person name="Senba T."/>
            <person name="Matsumura K."/>
            <person name="Nakajima Y."/>
            <person name="Mizuno T."/>
            <person name="Morinaga M."/>
            <person name="Sasaki M."/>
            <person name="Togashi T."/>
            <person name="Oyama M."/>
            <person name="Hata H."/>
            <person name="Watanabe M."/>
            <person name="Komatsu T."/>
            <person name="Mizushima-Sugano J."/>
            <person name="Satoh T."/>
            <person name="Shirai Y."/>
            <person name="Takahashi Y."/>
            <person name="Nakagawa K."/>
            <person name="Okumura K."/>
            <person name="Nagase T."/>
            <person name="Nomura N."/>
            <person name="Kikuchi H."/>
            <person name="Masuho Y."/>
            <person name="Yamashita R."/>
            <person name="Nakai K."/>
            <person name="Yada T."/>
            <person name="Nakamura Y."/>
            <person name="Ohara O."/>
            <person name="Isogai T."/>
            <person name="Sugano S."/>
        </authorList>
    </citation>
    <scope>NUCLEOTIDE SEQUENCE [LARGE SCALE MRNA] (ISOFORM PDE5A1)</scope>
    <scope>VARIANT VAL-93</scope>
    <source>
        <tissue>Thalamus</tissue>
    </source>
</reference>
<reference key="7">
    <citation type="journal article" date="2005" name="Nature">
        <title>Generation and annotation of the DNA sequences of human chromosomes 2 and 4.</title>
        <authorList>
            <person name="Hillier L.W."/>
            <person name="Graves T.A."/>
            <person name="Fulton R.S."/>
            <person name="Fulton L.A."/>
            <person name="Pepin K.H."/>
            <person name="Minx P."/>
            <person name="Wagner-McPherson C."/>
            <person name="Layman D."/>
            <person name="Wylie K."/>
            <person name="Sekhon M."/>
            <person name="Becker M.C."/>
            <person name="Fewell G.A."/>
            <person name="Delehaunty K.D."/>
            <person name="Miner T.L."/>
            <person name="Nash W.E."/>
            <person name="Kremitzki C."/>
            <person name="Oddy L."/>
            <person name="Du H."/>
            <person name="Sun H."/>
            <person name="Bradshaw-Cordum H."/>
            <person name="Ali J."/>
            <person name="Carter J."/>
            <person name="Cordes M."/>
            <person name="Harris A."/>
            <person name="Isak A."/>
            <person name="van Brunt A."/>
            <person name="Nguyen C."/>
            <person name="Du F."/>
            <person name="Courtney L."/>
            <person name="Kalicki J."/>
            <person name="Ozersky P."/>
            <person name="Abbott S."/>
            <person name="Armstrong J."/>
            <person name="Belter E.A."/>
            <person name="Caruso L."/>
            <person name="Cedroni M."/>
            <person name="Cotton M."/>
            <person name="Davidson T."/>
            <person name="Desai A."/>
            <person name="Elliott G."/>
            <person name="Erb T."/>
            <person name="Fronick C."/>
            <person name="Gaige T."/>
            <person name="Haakenson W."/>
            <person name="Haglund K."/>
            <person name="Holmes A."/>
            <person name="Harkins R."/>
            <person name="Kim K."/>
            <person name="Kruchowski S.S."/>
            <person name="Strong C.M."/>
            <person name="Grewal N."/>
            <person name="Goyea E."/>
            <person name="Hou S."/>
            <person name="Levy A."/>
            <person name="Martinka S."/>
            <person name="Mead K."/>
            <person name="McLellan M.D."/>
            <person name="Meyer R."/>
            <person name="Randall-Maher J."/>
            <person name="Tomlinson C."/>
            <person name="Dauphin-Kohlberg S."/>
            <person name="Kozlowicz-Reilly A."/>
            <person name="Shah N."/>
            <person name="Swearengen-Shahid S."/>
            <person name="Snider J."/>
            <person name="Strong J.T."/>
            <person name="Thompson J."/>
            <person name="Yoakum M."/>
            <person name="Leonard S."/>
            <person name="Pearman C."/>
            <person name="Trani L."/>
            <person name="Radionenko M."/>
            <person name="Waligorski J.E."/>
            <person name="Wang C."/>
            <person name="Rock S.M."/>
            <person name="Tin-Wollam A.-M."/>
            <person name="Maupin R."/>
            <person name="Latreille P."/>
            <person name="Wendl M.C."/>
            <person name="Yang S.-P."/>
            <person name="Pohl C."/>
            <person name="Wallis J.W."/>
            <person name="Spieth J."/>
            <person name="Bieri T.A."/>
            <person name="Berkowicz N."/>
            <person name="Nelson J.O."/>
            <person name="Osborne J."/>
            <person name="Ding L."/>
            <person name="Meyer R."/>
            <person name="Sabo A."/>
            <person name="Shotland Y."/>
            <person name="Sinha P."/>
            <person name="Wohldmann P.E."/>
            <person name="Cook L.L."/>
            <person name="Hickenbotham M.T."/>
            <person name="Eldred J."/>
            <person name="Williams D."/>
            <person name="Jones T.A."/>
            <person name="She X."/>
            <person name="Ciccarelli F.D."/>
            <person name="Izaurralde E."/>
            <person name="Taylor J."/>
            <person name="Schmutz J."/>
            <person name="Myers R.M."/>
            <person name="Cox D.R."/>
            <person name="Huang X."/>
            <person name="McPherson J.D."/>
            <person name="Mardis E.R."/>
            <person name="Clifton S.W."/>
            <person name="Warren W.C."/>
            <person name="Chinwalla A.T."/>
            <person name="Eddy S.R."/>
            <person name="Marra M.A."/>
            <person name="Ovcharenko I."/>
            <person name="Furey T.S."/>
            <person name="Miller W."/>
            <person name="Eichler E.E."/>
            <person name="Bork P."/>
            <person name="Suyama M."/>
            <person name="Torrents D."/>
            <person name="Waterston R.H."/>
            <person name="Wilson R.K."/>
        </authorList>
    </citation>
    <scope>NUCLEOTIDE SEQUENCE [LARGE SCALE GENOMIC DNA]</scope>
</reference>
<reference key="8">
    <citation type="journal article" date="2004" name="Genome Res.">
        <title>The status, quality, and expansion of the NIH full-length cDNA project: the Mammalian Gene Collection (MGC).</title>
        <authorList>
            <consortium name="The MGC Project Team"/>
        </authorList>
    </citation>
    <scope>NUCLEOTIDE SEQUENCE [LARGE SCALE MRNA] (ISOFORM PDE5A1)</scope>
</reference>
<reference key="9">
    <citation type="journal article" date="1999" name="Invest. Ophthalmol. Vis. Sci.">
        <title>Multiple cyclic nucleotide phosphodiesterases in human trabecular meshwork cells.</title>
        <authorList>
            <person name="Zhou L."/>
            <person name="Thompson W.J."/>
            <person name="Potter D.E."/>
        </authorList>
    </citation>
    <scope>NUCLEOTIDE SEQUENCE [MRNA] OF 157-411</scope>
    <source>
        <tissue>Trabecular meshwork</tissue>
    </source>
</reference>
<reference key="10">
    <citation type="journal article" date="2002" name="J. Biol. Chem.">
        <title>Regulation of cGMP-specific phosphodiesterase (PDE5) phosphorylation in smooth muscle cells.</title>
        <authorList>
            <person name="Rybalkin S.D."/>
            <person name="Rybalkina I.G."/>
            <person name="Feil R."/>
            <person name="Hofmann F."/>
            <person name="Beavo J.A."/>
        </authorList>
    </citation>
    <scope>PHOSPHORYLATION BY PRKG1</scope>
</reference>
<reference key="11">
    <citation type="journal article" date="2015" name="Nature">
        <title>Phosphodiesterase 9A controls nitric-oxide-independent cGMP and hypertrophic heart disease.</title>
        <authorList>
            <person name="Lee D.I."/>
            <person name="Zhu G."/>
            <person name="Sasaki T."/>
            <person name="Cho G.S."/>
            <person name="Hamdani N."/>
            <person name="Holewinski R."/>
            <person name="Jo S.H."/>
            <person name="Danner T."/>
            <person name="Zhang M."/>
            <person name="Rainer P.P."/>
            <person name="Bedja D."/>
            <person name="Kirk J.A."/>
            <person name="Ranek M.J."/>
            <person name="Dostmann W.R."/>
            <person name="Kwon C."/>
            <person name="Margulies K.B."/>
            <person name="Van Eyk J.E."/>
            <person name="Paulus W.J."/>
            <person name="Takimoto E."/>
            <person name="Kass D.A."/>
        </authorList>
    </citation>
    <scope>FUNCTION</scope>
</reference>
<reference evidence="22 23 24" key="12">
    <citation type="journal article" date="2004" name="Mol. Cell">
        <title>A glutamine switch mechanism for nucleotide selectivity by phosphodiesterases.</title>
        <authorList>
            <person name="Zhang K.Y.J."/>
            <person name="Card G.L."/>
            <person name="Suzuki Y."/>
            <person name="Artis D.R."/>
            <person name="Fong D."/>
            <person name="Gillette S."/>
            <person name="Hsieh D."/>
            <person name="Neiman J."/>
            <person name="West B.L."/>
            <person name="Zhang C."/>
            <person name="Milburn M.V."/>
            <person name="Kim S.-H."/>
            <person name="Schlessinger J."/>
            <person name="Bollag G."/>
        </authorList>
    </citation>
    <scope>X-RAY CRYSTALLOGRAPHY (1.30 ANGSTROMS) OF 534-858 IN COMPLEX WITH ZINC</scope>
    <scope>FUNCTION</scope>
    <scope>CATALYTIC ACTIVITY</scope>
    <scope>MUTAGENESIS OF ALA-767; GLN-775 AND TRP-853</scope>
    <scope>COFACTOR</scope>
</reference>
<reference key="13">
    <citation type="journal article" date="2003" name="Nature">
        <title>Structure of the catalytic domain of human phosphodiesterase 5 with bound drug molecules.</title>
        <authorList>
            <person name="Sung B.-J."/>
            <person name="Hwang K.Y."/>
            <person name="Jeon Y.H."/>
            <person name="Lee J.I."/>
            <person name="Heo Y.-S."/>
            <person name="Kim J.H."/>
            <person name="Moon J."/>
            <person name="Yoon J.M."/>
            <person name="Hyun Y.-L."/>
            <person name="Kim E."/>
            <person name="Eum S.J."/>
            <person name="Park S.-Y."/>
            <person name="Lee J.-O."/>
            <person name="Lee T.G."/>
            <person name="Ro S."/>
            <person name="Cho J.M."/>
        </authorList>
    </citation>
    <scope>X-RAY CRYSTALLOGRAPHY (2.3 ANGSTROMS) OF 537-860 IN COMPLEX WITH ZINC; MAGNESIUM AND THE INHIBITORS SILDENAFIL; TADALAFIL AND VARDENAFIL</scope>
    <scope>COFACTOR</scope>
    <scope>ACTIVITY REGULATION</scope>
</reference>
<feature type="chain" id="PRO_0000198823" description="cGMP-specific 3',5'-cyclic phosphodiesterase">
    <location>
        <begin position="1"/>
        <end position="875"/>
    </location>
</feature>
<feature type="domain" description="GAF 1">
    <location>
        <begin position="164"/>
        <end position="314"/>
    </location>
</feature>
<feature type="domain" description="GAF 2">
    <location>
        <begin position="346"/>
        <end position="503"/>
    </location>
</feature>
<feature type="domain" description="PDEase" evidence="4">
    <location>
        <begin position="536"/>
        <end position="860"/>
    </location>
</feature>
<feature type="region of interest" description="Disordered" evidence="5">
    <location>
        <begin position="1"/>
        <end position="29"/>
    </location>
</feature>
<feature type="region of interest" description="Disordered" evidence="5">
    <location>
        <begin position="78"/>
        <end position="102"/>
    </location>
</feature>
<feature type="compositionally biased region" description="Low complexity" evidence="5">
    <location>
        <begin position="10"/>
        <end position="22"/>
    </location>
</feature>
<feature type="compositionally biased region" description="Polar residues" evidence="5">
    <location>
        <begin position="78"/>
        <end position="101"/>
    </location>
</feature>
<feature type="active site" description="Proton donor" evidence="2">
    <location>
        <position position="613"/>
    </location>
</feature>
<feature type="binding site" evidence="7 9 22 23 24">
    <location>
        <position position="617"/>
    </location>
    <ligand>
        <name>Zn(2+)</name>
        <dbReference type="ChEBI" id="CHEBI:29105"/>
    </ligand>
</feature>
<feature type="binding site" evidence="7 9 22 23 24">
    <location>
        <position position="653"/>
    </location>
    <ligand>
        <name>Zn(2+)</name>
        <dbReference type="ChEBI" id="CHEBI:29105"/>
    </ligand>
</feature>
<feature type="binding site" evidence="7">
    <location>
        <position position="654"/>
    </location>
    <ligand>
        <name>Mg(2+)</name>
        <dbReference type="ChEBI" id="CHEBI:18420"/>
    </ligand>
</feature>
<feature type="binding site" evidence="7 9 22 23 24">
    <location>
        <position position="654"/>
    </location>
    <ligand>
        <name>Zn(2+)</name>
        <dbReference type="ChEBI" id="CHEBI:29105"/>
    </ligand>
</feature>
<feature type="binding site" evidence="7 9 22 23 24">
    <location>
        <position position="764"/>
    </location>
    <ligand>
        <name>Zn(2+)</name>
        <dbReference type="ChEBI" id="CHEBI:29105"/>
    </ligand>
</feature>
<feature type="binding site" evidence="7">
    <location>
        <position position="817"/>
    </location>
    <ligand>
        <name>3',5'-cyclic GMP</name>
        <dbReference type="ChEBI" id="CHEBI:57746"/>
    </ligand>
</feature>
<feature type="modified residue" description="Phosphoserine" evidence="3">
    <location>
        <position position="102"/>
    </location>
</feature>
<feature type="splice variant" id="VSP_004591" description="In isoform PDE5A2." evidence="16 17 18">
    <original>MERAGPSFGQQRQQQQPQQQKQQQRDQDSVEAWLDDHWDFTFSYFVRKA</original>
    <variation>MLPFGDK</variation>
    <location>
        <begin position="1"/>
        <end position="49"/>
    </location>
</feature>
<feature type="sequence variant" id="VAR_027775" description="In dbSNP:rs3733526." evidence="8 12 13 14 15">
    <original>A</original>
    <variation>V</variation>
    <location>
        <position position="93"/>
    </location>
</feature>
<feature type="sequence variant" id="VAR_027776" description="In dbSNP:rs17051276.">
    <original>S</original>
    <variation>A</variation>
    <location>
        <position position="181"/>
    </location>
</feature>
<feature type="mutagenesis site" description="Changes substrate selectivity from cGMP-specific to dual cAMP and cGMP binding and hydrolysis; when associated with Y-775 and Y-853." evidence="9">
    <original>A</original>
    <variation>N</variation>
    <location>
        <position position="767"/>
    </location>
</feature>
<feature type="mutagenesis site" description="Changes substrate selectivity from cGMP-specific to dual cAMP and cGMP binding and hydrolysis; when associated with N-767 and Y-853." evidence="9">
    <original>Q</original>
    <variation>Y</variation>
    <location>
        <position position="775"/>
    </location>
</feature>
<feature type="mutagenesis site" description="Changes substrate selectivity from cGMP-specific to dual cAMP and cGMP binding and hydrolysis; when associated with N-767 and Y-775." evidence="9">
    <original>W</original>
    <variation>Y</variation>
    <location>
        <position position="853"/>
    </location>
</feature>
<feature type="sequence conflict" description="In Ref. 9; AAP31235." evidence="19" ref="9">
    <original>I</original>
    <variation>V</variation>
    <location>
        <position position="159"/>
    </location>
</feature>
<feature type="sequence conflict" description="In Ref. 9; AAP31235." evidence="19" ref="9">
    <original>C</original>
    <variation>G</variation>
    <location>
        <position position="310"/>
    </location>
</feature>
<feature type="sequence conflict" description="In Ref. 9; AAP31235." evidence="19" ref="9">
    <original>S</original>
    <variation>F</variation>
    <location>
        <position position="381"/>
    </location>
</feature>
<feature type="sequence conflict" description="In Ref. 9; AAP31235." evidence="19" ref="9">
    <original>K</original>
    <variation>R</variation>
    <location>
        <position position="406"/>
    </location>
</feature>
<feature type="sequence conflict" description="In Ref. 4; BAA81667." evidence="19" ref="4">
    <original>E</original>
    <variation>G</variation>
    <location>
        <position position="642"/>
    </location>
</feature>
<feature type="helix" evidence="30">
    <location>
        <begin position="103"/>
        <end position="106"/>
    </location>
</feature>
<feature type="strand" evidence="30">
    <location>
        <begin position="115"/>
        <end position="117"/>
    </location>
</feature>
<feature type="turn" evidence="30">
    <location>
        <begin position="118"/>
        <end position="120"/>
    </location>
</feature>
<feature type="strand" evidence="30">
    <location>
        <begin position="121"/>
        <end position="124"/>
    </location>
</feature>
<feature type="helix" evidence="30">
    <location>
        <begin position="148"/>
        <end position="160"/>
    </location>
</feature>
<feature type="helix" evidence="30">
    <location>
        <begin position="165"/>
        <end position="177"/>
    </location>
</feature>
<feature type="strand" evidence="30">
    <location>
        <begin position="182"/>
        <end position="192"/>
    </location>
</feature>
<feature type="strand" evidence="30">
    <location>
        <begin position="198"/>
        <end position="205"/>
    </location>
</feature>
<feature type="strand" evidence="31">
    <location>
        <begin position="208"/>
        <end position="210"/>
    </location>
</feature>
<feature type="strand" evidence="30">
    <location>
        <begin position="213"/>
        <end position="218"/>
    </location>
</feature>
<feature type="strand" evidence="30">
    <location>
        <begin position="221"/>
        <end position="224"/>
    </location>
</feature>
<feature type="helix" evidence="30">
    <location>
        <begin position="228"/>
        <end position="236"/>
    </location>
</feature>
<feature type="strand" evidence="30">
    <location>
        <begin position="240"/>
        <end position="243"/>
    </location>
</feature>
<feature type="helix" evidence="30">
    <location>
        <begin position="245"/>
        <end position="247"/>
    </location>
</feature>
<feature type="helix" evidence="30">
    <location>
        <begin position="254"/>
        <end position="259"/>
    </location>
</feature>
<feature type="strand" evidence="30">
    <location>
        <begin position="266"/>
        <end position="272"/>
    </location>
</feature>
<feature type="strand" evidence="30">
    <location>
        <begin position="278"/>
        <end position="287"/>
    </location>
</feature>
<feature type="helix" evidence="30">
    <location>
        <begin position="299"/>
        <end position="340"/>
    </location>
</feature>
<feature type="turn" evidence="31">
    <location>
        <begin position="342"/>
        <end position="345"/>
    </location>
</feature>
<feature type="helix" evidence="29">
    <location>
        <begin position="346"/>
        <end position="362"/>
    </location>
</feature>
<feature type="strand" evidence="29">
    <location>
        <begin position="365"/>
        <end position="372"/>
    </location>
</feature>
<feature type="strand" evidence="30">
    <location>
        <begin position="374"/>
        <end position="376"/>
    </location>
</feature>
<feature type="strand" evidence="29">
    <location>
        <begin position="379"/>
        <end position="387"/>
    </location>
</feature>
<feature type="turn" evidence="30">
    <location>
        <begin position="388"/>
        <end position="390"/>
    </location>
</feature>
<feature type="strand" evidence="30">
    <location>
        <begin position="391"/>
        <end position="393"/>
    </location>
</feature>
<feature type="helix" evidence="29">
    <location>
        <begin position="400"/>
        <end position="403"/>
    </location>
</feature>
<feature type="helix" evidence="29">
    <location>
        <begin position="407"/>
        <end position="409"/>
    </location>
</feature>
<feature type="helix" evidence="29">
    <location>
        <begin position="410"/>
        <end position="418"/>
    </location>
</feature>
<feature type="strand" evidence="29">
    <location>
        <begin position="422"/>
        <end position="425"/>
    </location>
</feature>
<feature type="turn" evidence="29">
    <location>
        <begin position="427"/>
        <end position="429"/>
    </location>
</feature>
<feature type="strand" evidence="30">
    <location>
        <begin position="431"/>
        <end position="433"/>
    </location>
</feature>
<feature type="strand" evidence="29">
    <location>
        <begin position="451"/>
        <end position="457"/>
    </location>
</feature>
<feature type="strand" evidence="29">
    <location>
        <begin position="461"/>
        <end position="471"/>
    </location>
</feature>
<feature type="turn" evidence="30">
    <location>
        <begin position="476"/>
        <end position="478"/>
    </location>
</feature>
<feature type="helix" evidence="29">
    <location>
        <begin position="486"/>
        <end position="506"/>
    </location>
</feature>
<feature type="helix" evidence="26">
    <location>
        <begin position="535"/>
        <end position="545"/>
    </location>
</feature>
<feature type="helix" evidence="26">
    <location>
        <begin position="551"/>
        <end position="554"/>
    </location>
</feature>
<feature type="turn" evidence="26">
    <location>
        <begin position="555"/>
        <end position="557"/>
    </location>
</feature>
<feature type="helix" evidence="26">
    <location>
        <begin position="568"/>
        <end position="581"/>
    </location>
</feature>
<feature type="helix" evidence="26">
    <location>
        <begin position="584"/>
        <end position="587"/>
    </location>
</feature>
<feature type="helix" evidence="26">
    <location>
        <begin position="592"/>
        <end position="604"/>
    </location>
</feature>
<feature type="turn" evidence="25">
    <location>
        <begin position="606"/>
        <end position="608"/>
    </location>
</feature>
<feature type="strand" evidence="26">
    <location>
        <begin position="610"/>
        <end position="614"/>
    </location>
</feature>
<feature type="helix" evidence="26">
    <location>
        <begin position="615"/>
        <end position="630"/>
    </location>
</feature>
<feature type="turn" evidence="28">
    <location>
        <begin position="631"/>
        <end position="633"/>
    </location>
</feature>
<feature type="helix" evidence="26">
    <location>
        <begin position="635"/>
        <end position="637"/>
    </location>
</feature>
<feature type="helix" evidence="26">
    <location>
        <begin position="640"/>
        <end position="652"/>
    </location>
</feature>
<feature type="turn" evidence="26">
    <location>
        <begin position="653"/>
        <end position="656"/>
    </location>
</feature>
<feature type="helix" evidence="26">
    <location>
        <begin position="662"/>
        <end position="667"/>
    </location>
</feature>
<feature type="helix" evidence="26">
    <location>
        <begin position="671"/>
        <end position="675"/>
    </location>
</feature>
<feature type="strand" evidence="32">
    <location>
        <begin position="677"/>
        <end position="679"/>
    </location>
</feature>
<feature type="helix" evidence="26">
    <location>
        <begin position="680"/>
        <end position="694"/>
    </location>
</feature>
<feature type="turn" evidence="26">
    <location>
        <begin position="700"/>
        <end position="703"/>
    </location>
</feature>
<feature type="helix" evidence="26">
    <location>
        <begin position="706"/>
        <end position="722"/>
    </location>
</feature>
<feature type="helix" evidence="26">
    <location>
        <begin position="725"/>
        <end position="740"/>
    </location>
</feature>
<feature type="strand" evidence="27">
    <location>
        <begin position="746"/>
        <end position="748"/>
    </location>
</feature>
<feature type="helix" evidence="26">
    <location>
        <begin position="749"/>
        <end position="764"/>
    </location>
</feature>
<feature type="helix" evidence="26">
    <location>
        <begin position="766"/>
        <end position="769"/>
    </location>
</feature>
<feature type="helix" evidence="26">
    <location>
        <begin position="772"/>
        <end position="796"/>
    </location>
</feature>
<feature type="helix" evidence="26">
    <location>
        <begin position="803"/>
        <end position="805"/>
    </location>
</feature>
<feature type="helix" evidence="26">
    <location>
        <begin position="807"/>
        <end position="812"/>
    </location>
</feature>
<feature type="helix" evidence="26">
    <location>
        <begin position="813"/>
        <end position="823"/>
    </location>
</feature>
<feature type="helix" evidence="26">
    <location>
        <begin position="825"/>
        <end position="835"/>
    </location>
</feature>
<feature type="helix" evidence="26">
    <location>
        <begin position="837"/>
        <end position="839"/>
    </location>
</feature>
<feature type="helix" evidence="26">
    <location>
        <begin position="840"/>
        <end position="857"/>
    </location>
</feature>
<gene>
    <name evidence="21" type="primary">PDE5A</name>
    <name type="synonym">PDE5</name>
</gene>
<sequence length="875" mass="99985">MERAGPSFGQQRQQQQPQQQKQQQRDQDSVEAWLDDHWDFTFSYFVRKATREMVNAWFAERVHTIPVCKEGIRGHTESCSCPLQQSPRADNSAPGTPTRKISASEFDRPLRPIVVKDSEGTVSFLSDSEKKEQMPLTPPRFDHDEGDQCSRLLELVKDISSHLDVTALCHKIFLHIHGLISADRYSLFLVCEDSSNDKFLISRLFDVAEGSTLEEVSNNCIRLEWNKGIVGHVAALGEPLNIKDAYEDPRFNAEVDQITGYKTQSILCMPIKNHREEVVGVAQAINKKSGNGGTFTEKDEKDFAAYLAFCGIVLHNAQLYETSLLENKRNQVLLDLASLIFEEQQSLEVILKKIAATIISFMQVQKCTIFIVDEDCSDSFSSVFHMECEELEKSSDTLTREHDANKINYMYAQYVKNTMEPLNIPDVSKDKRFPWTTENTGNVNQQCIRSLLCTPIKNGKKNKVIGVCQLVNKMEENTGKVKPFNRNDEQFLEAFVIFCGLGIQNTQMYEAVERAMAKQMVTLEVLSYHASAAEEETRELQSLAAAVVPSAQTLKITDFSFSDFELSDLETALCTIRMFTDLNLVQNFQMKHEVLCRWILSVKKNYRKNVAYHNWRHAFNTAQCMFAALKAGKIQNKLTDLEILALLIAALSHDLDHRGVNNSYIQRSEHPLAQLYCHSIMEHHHFDQCLMILNSPGNQILSGLSIEEYKTTLKIIKQAILATDLALYIKRRGEFFELIRKNQFNLEDPHQKELFLAMLMTACDLSAITKPWPIQQRIAELVATEFFDQGDRERKELNIEPTDLMNREKKNKIPSMQVGFIDAICLQLYEALTHVSEDCFPLLDGCRKNRQKWQALAEQQEKMLINGESGQAKRN</sequence>
<name>PDE5A_HUMAN</name>
<comment type="function">
    <text evidence="10 13">Plays a role in signal transduction by regulating the intracellular concentration of cyclic nucleotides. This phosphodiesterase catalyzes the specific hydrolysis of cGMP to 5'-GMP (PubMed:15489334, PubMed:9714779). Specifically regulates nitric-oxide-generated cGMP (PubMed:15489334).</text>
</comment>
<comment type="catalytic activity">
    <reaction evidence="9 13">
        <text>3',5'-cyclic GMP + H2O = GMP + H(+)</text>
        <dbReference type="Rhea" id="RHEA:16957"/>
        <dbReference type="ChEBI" id="CHEBI:15377"/>
        <dbReference type="ChEBI" id="CHEBI:15378"/>
        <dbReference type="ChEBI" id="CHEBI:57746"/>
        <dbReference type="ChEBI" id="CHEBI:58115"/>
        <dbReference type="EC" id="3.1.4.35"/>
    </reaction>
    <physiologicalReaction direction="left-to-right" evidence="20">
        <dbReference type="Rhea" id="RHEA:16958"/>
    </physiologicalReaction>
</comment>
<comment type="cofactor">
    <cofactor evidence="7 9">
        <name>Zn(2+)</name>
        <dbReference type="ChEBI" id="CHEBI:29105"/>
    </cofactor>
    <text evidence="7 9">Binds 1 Zn(2+) ion per subunit. Binds 2 divalent metal cations per subunit: site 1 preferentially binds zinc, while site 2 has a preference for magnesium. Tightly binds zinc.</text>
</comment>
<comment type="cofactor">
    <cofactor evidence="7">
        <name>Mg(2+)</name>
        <dbReference type="ChEBI" id="CHEBI:18420"/>
    </cofactor>
    <text evidence="7">Binds 1 Mg(2+) ions per subunit. Binds 2 divalent metal cations per subunit: site 1 preferentially binds zinc, while site 2 has a preference for magnesium. Binds magnesium less tightly than zinc.</text>
</comment>
<comment type="activity regulation">
    <text evidence="7">Sildenafil (Viagra) is a highly selective and potent inhibitor of PDE5A and is effective in the treatment of penile erectile dysfunction. Also inhibited by zaprinast.</text>
</comment>
<comment type="pathway">
    <text>Purine metabolism; 3',5'-cyclic GMP degradation; GMP from 3',5'-cyclic GMP: step 1/1.</text>
</comment>
<comment type="interaction">
    <interactant intactId="EBI-9023531">
        <id>O76074</id>
    </interactant>
    <interactant intactId="EBI-3952014">
        <id>Q13976</id>
        <label>PRKG1</label>
    </interactant>
    <organismsDiffer>false</organismsDiffer>
    <experiments>4</experiments>
</comment>
<comment type="interaction">
    <interactant intactId="EBI-9023531">
        <id>O76074</id>
    </interactant>
    <interactant intactId="EBI-742688">
        <id>Q9NZD8</id>
        <label>SPG21</label>
    </interactant>
    <organismsDiffer>false</organismsDiffer>
    <experiments>3</experiments>
</comment>
<comment type="alternative products">
    <event type="alternative splicing"/>
    <isoform>
        <id>O76074-1</id>
        <name>PDE5A1</name>
        <sequence type="displayed"/>
    </isoform>
    <isoform>
        <id>O76074-2</id>
        <name>PDE5A2</name>
        <sequence type="described" ref="VSP_004591"/>
    </isoform>
</comment>
<comment type="tissue specificity">
    <text>Expressed in aortic smooth muscle cells, heart, placenta, skeletal muscle and pancreas and, to a much lesser extent, in brain, liver and lung.</text>
</comment>
<comment type="domain">
    <text>Composed of a C-terminal catalytic domain containing two putative divalent metal sites and an N-terminal regulatory domain which contains two homologous allosteric cGMP-binding regions, A and B.</text>
</comment>
<comment type="PTM">
    <text evidence="1 6">Phosphorylation is regulated by binding of cGMP to the two allosteric sites (By similarity). Phosphorylation by PRKG1 leads to its activation.</text>
</comment>
<comment type="similarity">
    <text evidence="19">Belongs to the cyclic nucleotide phosphodiesterase family.</text>
</comment>
<comment type="caution">
    <text evidence="11">Was initially thought to act as a major regulator of cardiac hypertrophy in myocytes and muscle and investigations have been made on selective PDE5A inhibitors that could protect against cardiovascular disease. However, while PDE5A regulates nitric-oxide-generated cGMP, nitric oxide signaling is often depressed by heart disease, limiting its effect. Moreover, clinical trial using PDE5A inhibitors were disappointing.</text>
</comment>
<keyword id="KW-0002">3D-structure</keyword>
<keyword id="KW-0021">Allosteric enzyme</keyword>
<keyword id="KW-0025">Alternative splicing</keyword>
<keyword id="KW-0140">cGMP</keyword>
<keyword id="KW-0142">cGMP-binding</keyword>
<keyword id="KW-0378">Hydrolase</keyword>
<keyword id="KW-0479">Metal-binding</keyword>
<keyword id="KW-0547">Nucleotide-binding</keyword>
<keyword id="KW-0597">Phosphoprotein</keyword>
<keyword id="KW-1267">Proteomics identification</keyword>
<keyword id="KW-1185">Reference proteome</keyword>
<keyword id="KW-0677">Repeat</keyword>
<keyword id="KW-0862">Zinc</keyword>
<dbReference type="EC" id="3.1.4.35" evidence="9 13"/>
<dbReference type="EMBL" id="AF043731">
    <property type="protein sequence ID" value="AAC63967.1"/>
    <property type="molecule type" value="mRNA"/>
</dbReference>
<dbReference type="EMBL" id="AF043732">
    <property type="protein sequence ID" value="AAC63968.1"/>
    <property type="molecule type" value="mRNA"/>
</dbReference>
<dbReference type="EMBL" id="AB001635">
    <property type="protein sequence ID" value="BAA33372.2"/>
    <property type="molecule type" value="Genomic_DNA"/>
</dbReference>
<dbReference type="EMBL" id="D89094">
    <property type="protein sequence ID" value="BAA28945.1"/>
    <property type="molecule type" value="mRNA"/>
</dbReference>
<dbReference type="EMBL" id="AJ004865">
    <property type="protein sequence ID" value="CAA06170.1"/>
    <property type="molecule type" value="mRNA"/>
</dbReference>
<dbReference type="EMBL" id="AB015656">
    <property type="protein sequence ID" value="BAA81667.1"/>
    <property type="molecule type" value="mRNA"/>
</dbReference>
<dbReference type="EMBL" id="AY264918">
    <property type="protein sequence ID" value="AAP21809.1"/>
    <property type="molecule type" value="mRNA"/>
</dbReference>
<dbReference type="EMBL" id="AK290189">
    <property type="protein sequence ID" value="BAF82878.1"/>
    <property type="molecule type" value="mRNA"/>
</dbReference>
<dbReference type="EMBL" id="AC093752">
    <property type="status" value="NOT_ANNOTATED_CDS"/>
    <property type="molecule type" value="Genomic_DNA"/>
</dbReference>
<dbReference type="EMBL" id="AC080089">
    <property type="status" value="NOT_ANNOTATED_CDS"/>
    <property type="molecule type" value="Genomic_DNA"/>
</dbReference>
<dbReference type="EMBL" id="BC126233">
    <property type="protein sequence ID" value="AAI26234.1"/>
    <property type="molecule type" value="mRNA"/>
</dbReference>
<dbReference type="EMBL" id="AY266363">
    <property type="protein sequence ID" value="AAP31235.1"/>
    <property type="molecule type" value="mRNA"/>
</dbReference>
<dbReference type="CCDS" id="CCDS34055.1">
    <molecule id="O76074-2"/>
</dbReference>
<dbReference type="CCDS" id="CCDS3713.1">
    <molecule id="O76074-1"/>
</dbReference>
<dbReference type="PIR" id="JW0106">
    <property type="entry name" value="JW0106"/>
</dbReference>
<dbReference type="RefSeq" id="NP_001074.2">
    <molecule id="O76074-1"/>
    <property type="nucleotide sequence ID" value="NM_001083.4"/>
</dbReference>
<dbReference type="RefSeq" id="NP_236914.2">
    <molecule id="O76074-2"/>
    <property type="nucleotide sequence ID" value="NM_033430.3"/>
</dbReference>
<dbReference type="RefSeq" id="NP_246273.2">
    <property type="nucleotide sequence ID" value="NM_033437.3"/>
</dbReference>
<dbReference type="PDB" id="1RKP">
    <property type="method" value="X-ray"/>
    <property type="resolution" value="2.05 A"/>
    <property type="chains" value="A=535-860"/>
</dbReference>
<dbReference type="PDB" id="1T9R">
    <property type="method" value="X-ray"/>
    <property type="resolution" value="2.10 A"/>
    <property type="chains" value="A=531-875"/>
</dbReference>
<dbReference type="PDB" id="1T9S">
    <property type="method" value="X-ray"/>
    <property type="resolution" value="2.00 A"/>
    <property type="chains" value="A/B=534-858"/>
</dbReference>
<dbReference type="PDB" id="1TBF">
    <property type="method" value="X-ray"/>
    <property type="resolution" value="1.30 A"/>
    <property type="chains" value="A=534-858"/>
</dbReference>
<dbReference type="PDB" id="1UDT">
    <property type="method" value="X-ray"/>
    <property type="resolution" value="2.30 A"/>
    <property type="chains" value="A=537-860"/>
</dbReference>
<dbReference type="PDB" id="1UDU">
    <property type="method" value="X-ray"/>
    <property type="resolution" value="2.83 A"/>
    <property type="chains" value="A/B=537-860"/>
</dbReference>
<dbReference type="PDB" id="1UHO">
    <property type="method" value="X-ray"/>
    <property type="resolution" value="2.50 A"/>
    <property type="chains" value="A=537-860"/>
</dbReference>
<dbReference type="PDB" id="1XOZ">
    <property type="method" value="X-ray"/>
    <property type="resolution" value="1.37 A"/>
    <property type="chains" value="A=534-875"/>
</dbReference>
<dbReference type="PDB" id="1XP0">
    <property type="method" value="X-ray"/>
    <property type="resolution" value="1.79 A"/>
    <property type="chains" value="A=534-875"/>
</dbReference>
<dbReference type="PDB" id="2CHM">
    <property type="method" value="X-ray"/>
    <property type="resolution" value="1.60 A"/>
    <property type="chains" value="A=534-656, A=682-858"/>
</dbReference>
<dbReference type="PDB" id="2H40">
    <property type="method" value="X-ray"/>
    <property type="resolution" value="1.85 A"/>
    <property type="chains" value="A=535-860"/>
</dbReference>
<dbReference type="PDB" id="2H42">
    <property type="method" value="X-ray"/>
    <property type="resolution" value="2.30 A"/>
    <property type="chains" value="A/B/C=535-860"/>
</dbReference>
<dbReference type="PDB" id="2H44">
    <property type="method" value="X-ray"/>
    <property type="resolution" value="1.80 A"/>
    <property type="chains" value="A=535-860"/>
</dbReference>
<dbReference type="PDB" id="2XSS">
    <property type="method" value="X-ray"/>
    <property type="resolution" value="2.50 A"/>
    <property type="chains" value="A/B=346-509"/>
</dbReference>
<dbReference type="PDB" id="3B2R">
    <property type="method" value="X-ray"/>
    <property type="resolution" value="2.07 A"/>
    <property type="chains" value="A/B=535-860"/>
</dbReference>
<dbReference type="PDB" id="3BJC">
    <property type="method" value="X-ray"/>
    <property type="resolution" value="2.00 A"/>
    <property type="chains" value="A=1-875"/>
</dbReference>
<dbReference type="PDB" id="3HC8">
    <property type="method" value="X-ray"/>
    <property type="resolution" value="1.79 A"/>
    <property type="chains" value="A=536-657, A=682-858"/>
</dbReference>
<dbReference type="PDB" id="3HDZ">
    <property type="method" value="X-ray"/>
    <property type="resolution" value="1.80 A"/>
    <property type="chains" value="A=536-657, A=682-858"/>
</dbReference>
<dbReference type="PDB" id="3JWQ">
    <property type="method" value="X-ray"/>
    <property type="resolution" value="2.87 A"/>
    <property type="chains" value="A/B/C/D=535-786, A/B/C/D=827-860"/>
</dbReference>
<dbReference type="PDB" id="3JWR">
    <property type="method" value="X-ray"/>
    <property type="resolution" value="2.99 A"/>
    <property type="chains" value="A/B=535-786, A/B=827-860"/>
</dbReference>
<dbReference type="PDB" id="3LFV">
    <property type="method" value="X-ray"/>
    <property type="resolution" value="2.80 A"/>
    <property type="chains" value="A/B=98-518"/>
</dbReference>
<dbReference type="PDB" id="3MF0">
    <property type="method" value="X-ray"/>
    <property type="resolution" value="3.10 A"/>
    <property type="chains" value="A/B=89-518"/>
</dbReference>
<dbReference type="PDB" id="3SHY">
    <property type="method" value="X-ray"/>
    <property type="resolution" value="2.65 A"/>
    <property type="chains" value="A=535-860"/>
</dbReference>
<dbReference type="PDB" id="3SHZ">
    <property type="method" value="X-ray"/>
    <property type="resolution" value="2.45 A"/>
    <property type="chains" value="A=535-860"/>
</dbReference>
<dbReference type="PDB" id="3SIE">
    <property type="method" value="X-ray"/>
    <property type="resolution" value="1.93 A"/>
    <property type="chains" value="A/B=535-860"/>
</dbReference>
<dbReference type="PDB" id="3TGE">
    <property type="method" value="X-ray"/>
    <property type="resolution" value="1.96 A"/>
    <property type="chains" value="A=534-656, A=682-858"/>
</dbReference>
<dbReference type="PDB" id="3TGG">
    <property type="method" value="X-ray"/>
    <property type="resolution" value="1.91 A"/>
    <property type="chains" value="A=534-660, A=662-858"/>
</dbReference>
<dbReference type="PDB" id="4G2W">
    <property type="method" value="X-ray"/>
    <property type="resolution" value="2.28 A"/>
    <property type="chains" value="A=535-860"/>
</dbReference>
<dbReference type="PDB" id="4G2Y">
    <property type="method" value="X-ray"/>
    <property type="resolution" value="2.40 A"/>
    <property type="chains" value="A=535-860"/>
</dbReference>
<dbReference type="PDB" id="4I9Z">
    <property type="method" value="X-ray"/>
    <property type="resolution" value="2.08 A"/>
    <property type="chains" value="A=535-860"/>
</dbReference>
<dbReference type="PDB" id="4IA0">
    <property type="method" value="X-ray"/>
    <property type="resolution" value="2.17 A"/>
    <property type="chains" value="A=535-860"/>
</dbReference>
<dbReference type="PDB" id="4MD6">
    <property type="method" value="X-ray"/>
    <property type="resolution" value="2.00 A"/>
    <property type="chains" value="A=535-860"/>
</dbReference>
<dbReference type="PDB" id="4OEW">
    <property type="method" value="X-ray"/>
    <property type="resolution" value="2.44 A"/>
    <property type="chains" value="A=535-860"/>
</dbReference>
<dbReference type="PDB" id="4OEX">
    <property type="method" value="X-ray"/>
    <property type="resolution" value="2.14 A"/>
    <property type="chains" value="A=535-860"/>
</dbReference>
<dbReference type="PDB" id="5JO3">
    <property type="method" value="X-ray"/>
    <property type="resolution" value="1.49 A"/>
    <property type="chains" value="B=534-858"/>
</dbReference>
<dbReference type="PDB" id="5ZZ2">
    <property type="method" value="X-ray"/>
    <property type="resolution" value="2.60 A"/>
    <property type="chains" value="A=535-860"/>
</dbReference>
<dbReference type="PDB" id="6ACB">
    <property type="method" value="X-ray"/>
    <property type="resolution" value="2.80 A"/>
    <property type="chains" value="A=535-860"/>
</dbReference>
<dbReference type="PDB" id="6IWI">
    <property type="method" value="X-ray"/>
    <property type="resolution" value="2.15 A"/>
    <property type="chains" value="A=535-860"/>
</dbReference>
<dbReference type="PDB" id="6L6E">
    <property type="method" value="X-ray"/>
    <property type="resolution" value="1.92 A"/>
    <property type="chains" value="A=536-861"/>
</dbReference>
<dbReference type="PDB" id="6VBI">
    <property type="method" value="X-ray"/>
    <property type="resolution" value="2.30 A"/>
    <property type="chains" value="A/B=535-859"/>
</dbReference>
<dbReference type="PDB" id="7FAQ">
    <property type="method" value="X-ray"/>
    <property type="resolution" value="2.20 A"/>
    <property type="chains" value="A=527-875"/>
</dbReference>
<dbReference type="PDB" id="7FAR">
    <property type="method" value="X-ray"/>
    <property type="resolution" value="2.40 A"/>
    <property type="chains" value="A=527-875"/>
</dbReference>
<dbReference type="PDB" id="8W4S">
    <property type="method" value="X-ray"/>
    <property type="resolution" value="1.85 A"/>
    <property type="chains" value="A=535-860"/>
</dbReference>
<dbReference type="PDB" id="8W4T">
    <property type="method" value="X-ray"/>
    <property type="resolution" value="2.20 A"/>
    <property type="chains" value="A=535-860"/>
</dbReference>
<dbReference type="PDB" id="8WKF">
    <property type="method" value="X-ray"/>
    <property type="resolution" value="2.40 A"/>
    <property type="chains" value="A=527-859"/>
</dbReference>
<dbReference type="PDB" id="8WKG">
    <property type="method" value="X-ray"/>
    <property type="resolution" value="2.40 A"/>
    <property type="chains" value="A=527-859"/>
</dbReference>
<dbReference type="PDB" id="8XWW">
    <property type="method" value="X-ray"/>
    <property type="resolution" value="2.46 A"/>
    <property type="chains" value="A=527-875"/>
</dbReference>
<dbReference type="PDBsum" id="1RKP"/>
<dbReference type="PDBsum" id="1T9R"/>
<dbReference type="PDBsum" id="1T9S"/>
<dbReference type="PDBsum" id="1TBF"/>
<dbReference type="PDBsum" id="1UDT"/>
<dbReference type="PDBsum" id="1UDU"/>
<dbReference type="PDBsum" id="1UHO"/>
<dbReference type="PDBsum" id="1XOZ"/>
<dbReference type="PDBsum" id="1XP0"/>
<dbReference type="PDBsum" id="2CHM"/>
<dbReference type="PDBsum" id="2H40"/>
<dbReference type="PDBsum" id="2H42"/>
<dbReference type="PDBsum" id="2H44"/>
<dbReference type="PDBsum" id="2XSS"/>
<dbReference type="PDBsum" id="3B2R"/>
<dbReference type="PDBsum" id="3BJC"/>
<dbReference type="PDBsum" id="3HC8"/>
<dbReference type="PDBsum" id="3HDZ"/>
<dbReference type="PDBsum" id="3JWQ"/>
<dbReference type="PDBsum" id="3JWR"/>
<dbReference type="PDBsum" id="3LFV"/>
<dbReference type="PDBsum" id="3MF0"/>
<dbReference type="PDBsum" id="3SHY"/>
<dbReference type="PDBsum" id="3SHZ"/>
<dbReference type="PDBsum" id="3SIE"/>
<dbReference type="PDBsum" id="3TGE"/>
<dbReference type="PDBsum" id="3TGG"/>
<dbReference type="PDBsum" id="4G2W"/>
<dbReference type="PDBsum" id="4G2Y"/>
<dbReference type="PDBsum" id="4I9Z"/>
<dbReference type="PDBsum" id="4IA0"/>
<dbReference type="PDBsum" id="4MD6"/>
<dbReference type="PDBsum" id="4OEW"/>
<dbReference type="PDBsum" id="4OEX"/>
<dbReference type="PDBsum" id="5JO3"/>
<dbReference type="PDBsum" id="5ZZ2"/>
<dbReference type="PDBsum" id="6ACB"/>
<dbReference type="PDBsum" id="6IWI"/>
<dbReference type="PDBsum" id="6L6E"/>
<dbReference type="PDBsum" id="6VBI"/>
<dbReference type="PDBsum" id="7FAQ"/>
<dbReference type="PDBsum" id="7FAR"/>
<dbReference type="PDBsum" id="8W4S"/>
<dbReference type="PDBsum" id="8W4T"/>
<dbReference type="PDBsum" id="8WKF"/>
<dbReference type="PDBsum" id="8WKG"/>
<dbReference type="PDBsum" id="8XWW"/>
<dbReference type="SMR" id="O76074"/>
<dbReference type="BioGRID" id="114205">
    <property type="interactions" value="13"/>
</dbReference>
<dbReference type="CORUM" id="O76074"/>
<dbReference type="DIP" id="DIP-46287N"/>
<dbReference type="FunCoup" id="O76074">
    <property type="interactions" value="403"/>
</dbReference>
<dbReference type="IntAct" id="O76074">
    <property type="interactions" value="8"/>
</dbReference>
<dbReference type="MINT" id="O76074"/>
<dbReference type="STRING" id="9606.ENSP00000347046"/>
<dbReference type="BindingDB" id="O76074"/>
<dbReference type="ChEMBL" id="CHEMBL1827"/>
<dbReference type="DrugBank" id="DB07954">
    <property type="generic name" value="3-isobutyl-1-methyl-7H-xanthine"/>
</dbReference>
<dbReference type="DrugBank" id="DB08729">
    <property type="generic name" value="5-ethoxy-4-(1-methyl-7-oxo-3-propyl-6,7-dihydro-1H-pyrazolo[4,3-d]pyrimidin-5-yl)thiophene-2-sulfonamide"/>
</dbReference>
<dbReference type="DrugBank" id="DB06237">
    <property type="generic name" value="Avanafil"/>
</dbReference>
<dbReference type="DrugBank" id="DB00201">
    <property type="generic name" value="Caffeine"/>
</dbReference>
<dbReference type="DrugBank" id="DB00975">
    <property type="generic name" value="Dipyridamole"/>
</dbReference>
<dbReference type="DrugBank" id="DB06246">
    <property type="generic name" value="Exisulind"/>
</dbReference>
<dbReference type="DrugBank" id="DB12010">
    <property type="generic name" value="Fostamatinib"/>
</dbReference>
<dbReference type="DrugBank" id="DB03597">
    <property type="generic name" value="gamma-Glutamyl[S-(2-iodobenzyl)cysteinyl]glycine"/>
</dbReference>
<dbReference type="DrugBank" id="DB11902">
    <property type="generic name" value="Gisadenafil"/>
</dbReference>
<dbReference type="DrugBank" id="DB01972">
    <property type="generic name" value="Guanosine-5'-Monophosphate"/>
</dbReference>
<dbReference type="DrugBank" id="DB12052">
    <property type="generic name" value="Icariin"/>
</dbReference>
<dbReference type="DrugBank" id="DB09282">
    <property type="generic name" value="Molsidomine"/>
</dbReference>
<dbReference type="DrugBank" id="DB05415">
    <property type="generic name" value="OSI-461"/>
</dbReference>
<dbReference type="DrugBank" id="DB01113">
    <property type="generic name" value="Papaverine"/>
</dbReference>
<dbReference type="DrugBank" id="DB11736">
    <property type="generic name" value="PF-00489791"/>
</dbReference>
<dbReference type="DrugBank" id="DB01954">
    <property type="generic name" value="Rolipram"/>
</dbReference>
<dbReference type="DrugBank" id="DB00203">
    <property type="generic name" value="Sildenafil"/>
</dbReference>
<dbReference type="DrugBank" id="DB00820">
    <property type="generic name" value="Tadalafil"/>
</dbReference>
<dbReference type="DrugBank" id="DB00277">
    <property type="generic name" value="Theophylline"/>
</dbReference>
<dbReference type="DrugBank" id="DB09283">
    <property type="generic name" value="Trapidil"/>
</dbReference>
<dbReference type="DrugBank" id="DB06267">
    <property type="generic name" value="Udenafil"/>
</dbReference>
<dbReference type="DrugBank" id="DB00862">
    <property type="generic name" value="Vardenafil"/>
</dbReference>
<dbReference type="DrugCentral" id="O76074"/>
<dbReference type="GuidetoPHARMACOLOGY" id="1304"/>
<dbReference type="GlyGen" id="O76074">
    <property type="glycosylation" value="2 sites, 1 O-linked glycan (1 site)"/>
</dbReference>
<dbReference type="iPTMnet" id="O76074"/>
<dbReference type="PhosphoSitePlus" id="O76074"/>
<dbReference type="BioMuta" id="PDE5A"/>
<dbReference type="jPOST" id="O76074"/>
<dbReference type="MassIVE" id="O76074"/>
<dbReference type="PaxDb" id="9606-ENSP00000347046"/>
<dbReference type="PeptideAtlas" id="O76074"/>
<dbReference type="ProteomicsDB" id="50374">
    <molecule id="O76074-1"/>
</dbReference>
<dbReference type="ProteomicsDB" id="50375">
    <molecule id="O76074-2"/>
</dbReference>
<dbReference type="Pumba" id="O76074"/>
<dbReference type="Antibodypedia" id="1386">
    <property type="antibodies" value="194 antibodies from 35 providers"/>
</dbReference>
<dbReference type="DNASU" id="8654"/>
<dbReference type="Ensembl" id="ENST00000264805.9">
    <molecule id="O76074-2"/>
    <property type="protein sequence ID" value="ENSP00000264805.5"/>
    <property type="gene ID" value="ENSG00000138735.16"/>
</dbReference>
<dbReference type="Ensembl" id="ENST00000354960.8">
    <molecule id="O76074-1"/>
    <property type="protein sequence ID" value="ENSP00000347046.3"/>
    <property type="gene ID" value="ENSG00000138735.16"/>
</dbReference>
<dbReference type="GeneID" id="8654"/>
<dbReference type="KEGG" id="hsa:8654"/>
<dbReference type="MANE-Select" id="ENST00000354960.8">
    <property type="protein sequence ID" value="ENSP00000347046.3"/>
    <property type="RefSeq nucleotide sequence ID" value="NM_001083.4"/>
    <property type="RefSeq protein sequence ID" value="NP_001074.2"/>
</dbReference>
<dbReference type="UCSC" id="uc003idf.4">
    <molecule id="O76074-1"/>
    <property type="organism name" value="human"/>
</dbReference>
<dbReference type="AGR" id="HGNC:8784"/>
<dbReference type="CTD" id="8654"/>
<dbReference type="DisGeNET" id="8654"/>
<dbReference type="GeneCards" id="PDE5A"/>
<dbReference type="HGNC" id="HGNC:8784">
    <property type="gene designation" value="PDE5A"/>
</dbReference>
<dbReference type="HPA" id="ENSG00000138735">
    <property type="expression patterns" value="Low tissue specificity"/>
</dbReference>
<dbReference type="MIM" id="603310">
    <property type="type" value="gene"/>
</dbReference>
<dbReference type="neXtProt" id="NX_O76074"/>
<dbReference type="OpenTargets" id="ENSG00000138735"/>
<dbReference type="PharmGKB" id="PA33132"/>
<dbReference type="VEuPathDB" id="HostDB:ENSG00000138735"/>
<dbReference type="eggNOG" id="KOG3689">
    <property type="taxonomic scope" value="Eukaryota"/>
</dbReference>
<dbReference type="GeneTree" id="ENSGT00940000155475"/>
<dbReference type="InParanoid" id="O76074"/>
<dbReference type="OMA" id="PIWLPLA"/>
<dbReference type="OrthoDB" id="74705at2759"/>
<dbReference type="PAN-GO" id="O76074">
    <property type="GO annotations" value="2 GO annotations based on evolutionary models"/>
</dbReference>
<dbReference type="PhylomeDB" id="O76074"/>
<dbReference type="TreeFam" id="TF316499"/>
<dbReference type="BRENDA" id="3.1.4.35">
    <property type="organism ID" value="2681"/>
</dbReference>
<dbReference type="PathwayCommons" id="O76074"/>
<dbReference type="Reactome" id="R-HSA-418457">
    <property type="pathway name" value="cGMP effects"/>
</dbReference>
<dbReference type="Reactome" id="R-HSA-445355">
    <property type="pathway name" value="Smooth Muscle Contraction"/>
</dbReference>
<dbReference type="Reactome" id="R-HSA-9013422">
    <property type="pathway name" value="RHOBTB1 GTPase cycle"/>
</dbReference>
<dbReference type="SignaLink" id="O76074"/>
<dbReference type="SIGNOR" id="O76074"/>
<dbReference type="UniPathway" id="UPA00763">
    <property type="reaction ID" value="UER00748"/>
</dbReference>
<dbReference type="BioGRID-ORCS" id="8654">
    <property type="hits" value="11 hits in 1157 CRISPR screens"/>
</dbReference>
<dbReference type="ChiTaRS" id="PDE5A">
    <property type="organism name" value="human"/>
</dbReference>
<dbReference type="EvolutionaryTrace" id="O76074"/>
<dbReference type="GeneWiki" id="CGMP-specific_phosphodiesterase_type_5"/>
<dbReference type="GenomeRNAi" id="8654"/>
<dbReference type="Pharos" id="O76074">
    <property type="development level" value="Tclin"/>
</dbReference>
<dbReference type="PRO" id="PR:O76074"/>
<dbReference type="Proteomes" id="UP000005640">
    <property type="component" value="Chromosome 4"/>
</dbReference>
<dbReference type="RNAct" id="O76074">
    <property type="molecule type" value="protein"/>
</dbReference>
<dbReference type="Bgee" id="ENSG00000138735">
    <property type="expression patterns" value="Expressed in calcaneal tendon and 151 other cell types or tissues"/>
</dbReference>
<dbReference type="ExpressionAtlas" id="O76074">
    <property type="expression patterns" value="baseline and differential"/>
</dbReference>
<dbReference type="GO" id="GO:0005829">
    <property type="term" value="C:cytosol"/>
    <property type="evidence" value="ECO:0000304"/>
    <property type="project" value="Reactome"/>
</dbReference>
<dbReference type="GO" id="GO:0004115">
    <property type="term" value="F:3',5'-cyclic-AMP phosphodiesterase activity"/>
    <property type="evidence" value="ECO:0000318"/>
    <property type="project" value="GO_Central"/>
</dbReference>
<dbReference type="GO" id="GO:0047555">
    <property type="term" value="F:3',5'-cyclic-GMP phosphodiesterase activity"/>
    <property type="evidence" value="ECO:0000314"/>
    <property type="project" value="UniProtKB"/>
</dbReference>
<dbReference type="GO" id="GO:0004114">
    <property type="term" value="F:3',5'-cyclic-nucleotide phosphodiesterase activity"/>
    <property type="evidence" value="ECO:0000303"/>
    <property type="project" value="UniProtKB"/>
</dbReference>
<dbReference type="GO" id="GO:0030553">
    <property type="term" value="F:cGMP binding"/>
    <property type="evidence" value="ECO:0000304"/>
    <property type="project" value="UniProtKB"/>
</dbReference>
<dbReference type="GO" id="GO:0046872">
    <property type="term" value="F:metal ion binding"/>
    <property type="evidence" value="ECO:0007669"/>
    <property type="project" value="UniProtKB-KW"/>
</dbReference>
<dbReference type="GO" id="GO:0019933">
    <property type="term" value="P:cAMP-mediated signaling"/>
    <property type="evidence" value="ECO:0000318"/>
    <property type="project" value="GO_Central"/>
</dbReference>
<dbReference type="GO" id="GO:0046069">
    <property type="term" value="P:cGMP catabolic process"/>
    <property type="evidence" value="ECO:0007669"/>
    <property type="project" value="UniProtKB-UniPathway"/>
</dbReference>
<dbReference type="CDD" id="cd00077">
    <property type="entry name" value="HDc"/>
    <property type="match status" value="1"/>
</dbReference>
<dbReference type="DisProt" id="DP01244"/>
<dbReference type="FunFam" id="1.10.1300.10:FF:000003">
    <property type="entry name" value="Phosphodiesterase"/>
    <property type="match status" value="1"/>
</dbReference>
<dbReference type="FunFam" id="3.30.450.40:FF:000004">
    <property type="entry name" value="Phosphodiesterase"/>
    <property type="match status" value="1"/>
</dbReference>
<dbReference type="FunFam" id="3.30.450.40:FF:000015">
    <property type="entry name" value="Phosphodiesterase"/>
    <property type="match status" value="1"/>
</dbReference>
<dbReference type="Gene3D" id="3.30.450.40">
    <property type="match status" value="2"/>
</dbReference>
<dbReference type="Gene3D" id="1.10.1300.10">
    <property type="entry name" value="3'5'-cyclic nucleotide phosphodiesterase, catalytic domain"/>
    <property type="match status" value="1"/>
</dbReference>
<dbReference type="InterPro" id="IPR003018">
    <property type="entry name" value="GAF"/>
</dbReference>
<dbReference type="InterPro" id="IPR029016">
    <property type="entry name" value="GAF-like_dom_sf"/>
</dbReference>
<dbReference type="InterPro" id="IPR003607">
    <property type="entry name" value="HD/PDEase_dom"/>
</dbReference>
<dbReference type="InterPro" id="IPR023088">
    <property type="entry name" value="PDEase"/>
</dbReference>
<dbReference type="InterPro" id="IPR002073">
    <property type="entry name" value="PDEase_catalytic_dom"/>
</dbReference>
<dbReference type="InterPro" id="IPR036971">
    <property type="entry name" value="PDEase_catalytic_dom_sf"/>
</dbReference>
<dbReference type="InterPro" id="IPR023174">
    <property type="entry name" value="PDEase_CS"/>
</dbReference>
<dbReference type="PANTHER" id="PTHR11347">
    <property type="entry name" value="CYCLIC NUCLEOTIDE PHOSPHODIESTERASE"/>
    <property type="match status" value="1"/>
</dbReference>
<dbReference type="Pfam" id="PF01590">
    <property type="entry name" value="GAF"/>
    <property type="match status" value="2"/>
</dbReference>
<dbReference type="Pfam" id="PF00233">
    <property type="entry name" value="PDEase_I"/>
    <property type="match status" value="1"/>
</dbReference>
<dbReference type="PRINTS" id="PR00387">
    <property type="entry name" value="PDIESTERASE1"/>
</dbReference>
<dbReference type="SMART" id="SM00065">
    <property type="entry name" value="GAF"/>
    <property type="match status" value="2"/>
</dbReference>
<dbReference type="SMART" id="SM00471">
    <property type="entry name" value="HDc"/>
    <property type="match status" value="1"/>
</dbReference>
<dbReference type="SUPFAM" id="SSF55781">
    <property type="entry name" value="GAF domain-like"/>
    <property type="match status" value="2"/>
</dbReference>
<dbReference type="SUPFAM" id="SSF109604">
    <property type="entry name" value="HD-domain/PDEase-like"/>
    <property type="match status" value="1"/>
</dbReference>
<dbReference type="PROSITE" id="PS00126">
    <property type="entry name" value="PDEASE_I_1"/>
    <property type="match status" value="1"/>
</dbReference>
<dbReference type="PROSITE" id="PS51845">
    <property type="entry name" value="PDEASE_I_2"/>
    <property type="match status" value="1"/>
</dbReference>
<accession>O76074</accession>
<accession>A0AV69</accession>
<accession>A8K2C4</accession>
<accession>O75026</accession>
<accession>O75887</accession>
<accession>Q86UI0</accession>
<accession>Q86V66</accession>
<accession>Q9Y6Z6</accession>
<organism>
    <name type="scientific">Homo sapiens</name>
    <name type="common">Human</name>
    <dbReference type="NCBI Taxonomy" id="9606"/>
    <lineage>
        <taxon>Eukaryota</taxon>
        <taxon>Metazoa</taxon>
        <taxon>Chordata</taxon>
        <taxon>Craniata</taxon>
        <taxon>Vertebrata</taxon>
        <taxon>Euteleostomi</taxon>
        <taxon>Mammalia</taxon>
        <taxon>Eutheria</taxon>
        <taxon>Euarchontoglires</taxon>
        <taxon>Primates</taxon>
        <taxon>Haplorrhini</taxon>
        <taxon>Catarrhini</taxon>
        <taxon>Hominidae</taxon>
        <taxon>Homo</taxon>
    </lineage>
</organism>
<protein>
    <recommendedName>
        <fullName evidence="19">cGMP-specific 3',5'-cyclic phosphodiesterase</fullName>
        <ecNumber evidence="9 13">3.1.4.35</ecNumber>
    </recommendedName>
    <alternativeName>
        <fullName>cGMP-binding cGMP-specific phosphodiesterase</fullName>
        <shortName>CGB-PDE</shortName>
    </alternativeName>
</protein>
<evidence type="ECO:0000250" key="1"/>
<evidence type="ECO:0000250" key="2">
    <source>
        <dbReference type="UniProtKB" id="O76083"/>
    </source>
</evidence>
<evidence type="ECO:0000255" key="3"/>
<evidence type="ECO:0000255" key="4">
    <source>
        <dbReference type="PROSITE-ProRule" id="PRU01192"/>
    </source>
</evidence>
<evidence type="ECO:0000256" key="5">
    <source>
        <dbReference type="SAM" id="MobiDB-lite"/>
    </source>
</evidence>
<evidence type="ECO:0000269" key="6">
    <source>
    </source>
</evidence>
<evidence type="ECO:0000269" key="7">
    <source>
    </source>
</evidence>
<evidence type="ECO:0000269" key="8">
    <source>
    </source>
</evidence>
<evidence type="ECO:0000269" key="9">
    <source>
    </source>
</evidence>
<evidence type="ECO:0000269" key="10">
    <source>
    </source>
</evidence>
<evidence type="ECO:0000269" key="11">
    <source>
    </source>
</evidence>
<evidence type="ECO:0000269" key="12">
    <source>
    </source>
</evidence>
<evidence type="ECO:0000269" key="13">
    <source>
    </source>
</evidence>
<evidence type="ECO:0000269" key="14">
    <source>
    </source>
</evidence>
<evidence type="ECO:0000269" key="15">
    <source ref="4"/>
</evidence>
<evidence type="ECO:0000303" key="16">
    <source>
    </source>
</evidence>
<evidence type="ECO:0000303" key="17">
    <source ref="4"/>
</evidence>
<evidence type="ECO:0000303" key="18">
    <source ref="5"/>
</evidence>
<evidence type="ECO:0000305" key="19"/>
<evidence type="ECO:0000305" key="20">
    <source>
    </source>
</evidence>
<evidence type="ECO:0000312" key="21">
    <source>
        <dbReference type="HGNC" id="HGNC:8784"/>
    </source>
</evidence>
<evidence type="ECO:0007744" key="22">
    <source>
        <dbReference type="PDB" id="1T9R"/>
    </source>
</evidence>
<evidence type="ECO:0007744" key="23">
    <source>
        <dbReference type="PDB" id="1T9S"/>
    </source>
</evidence>
<evidence type="ECO:0007744" key="24">
    <source>
        <dbReference type="PDB" id="1TBF"/>
    </source>
</evidence>
<evidence type="ECO:0007829" key="25">
    <source>
        <dbReference type="PDB" id="1T9R"/>
    </source>
</evidence>
<evidence type="ECO:0007829" key="26">
    <source>
        <dbReference type="PDB" id="1TBF"/>
    </source>
</evidence>
<evidence type="ECO:0007829" key="27">
    <source>
        <dbReference type="PDB" id="1UDU"/>
    </source>
</evidence>
<evidence type="ECO:0007829" key="28">
    <source>
        <dbReference type="PDB" id="1UHO"/>
    </source>
</evidence>
<evidence type="ECO:0007829" key="29">
    <source>
        <dbReference type="PDB" id="2XSS"/>
    </source>
</evidence>
<evidence type="ECO:0007829" key="30">
    <source>
        <dbReference type="PDB" id="3LFV"/>
    </source>
</evidence>
<evidence type="ECO:0007829" key="31">
    <source>
        <dbReference type="PDB" id="3MF0"/>
    </source>
</evidence>
<evidence type="ECO:0007829" key="32">
    <source>
        <dbReference type="PDB" id="6L6E"/>
    </source>
</evidence>
<proteinExistence type="evidence at protein level"/>